<gene>
    <name type="primary">Mia</name>
    <name type="synonym">Cdrap</name>
    <name type="synonym">Mia1</name>
</gene>
<protein>
    <recommendedName>
        <fullName>Melanoma-derived growth regulatory protein</fullName>
    </recommendedName>
    <alternativeName>
        <fullName>Cartilage-derived retinoic acid-sensitive protein</fullName>
        <shortName>CD-RAP</shortName>
    </alternativeName>
    <alternativeName>
        <fullName>Melanoma inhibitory activity protein</fullName>
    </alternativeName>
</protein>
<feature type="signal peptide" evidence="2">
    <location>
        <begin position="1"/>
        <end position="22"/>
    </location>
</feature>
<feature type="chain" id="PRO_0000019030" description="Melanoma-derived growth regulatory protein">
    <location>
        <begin position="23"/>
        <end position="130"/>
    </location>
</feature>
<feature type="domain" description="SH3" evidence="3">
    <location>
        <begin position="42"/>
        <end position="112"/>
    </location>
</feature>
<feature type="disulfide bond" evidence="1">
    <location>
        <begin position="35"/>
        <end position="40"/>
    </location>
</feature>
<feature type="disulfide bond" evidence="1">
    <location>
        <begin position="58"/>
        <end position="129"/>
    </location>
</feature>
<feature type="sequence conflict" description="In Ref. 2; AAC52481." evidence="4" ref="2">
    <original>MA</original>
    <variation>VT</variation>
    <location>
        <begin position="46"/>
        <end position="47"/>
    </location>
</feature>
<reference key="1">
    <citation type="journal article" date="1997" name="Mol. Carcinog.">
        <title>Gene expression changes associated with chemically induced rat mammary carcinogenesis.</title>
        <authorList>
            <person name="Lu J.X."/>
            <person name="Pei H."/>
            <person name="Kaeck M."/>
            <person name="Thompson H.J."/>
        </authorList>
    </citation>
    <scope>NUCLEOTIDE SEQUENCE [MRNA]</scope>
    <source>
        <strain>Sprague-Dawley</strain>
        <tissue>Mammary gland</tissue>
    </source>
</reference>
<reference key="2">
    <citation type="journal article" date="1996" name="J. Biol. Chem.">
        <title>Cloning of a retinoic acid-sensitive mRNA expressed in cartilage and during chondrogenesis.</title>
        <authorList>
            <person name="Dietz U.H."/>
            <person name="Sandell L.J."/>
        </authorList>
    </citation>
    <scope>NUCLEOTIDE SEQUENCE [MRNA] OF 34-124</scope>
    <source>
        <tissue>Cartilage</tissue>
    </source>
</reference>
<organism>
    <name type="scientific">Rattus norvegicus</name>
    <name type="common">Rat</name>
    <dbReference type="NCBI Taxonomy" id="10116"/>
    <lineage>
        <taxon>Eukaryota</taxon>
        <taxon>Metazoa</taxon>
        <taxon>Chordata</taxon>
        <taxon>Craniata</taxon>
        <taxon>Vertebrata</taxon>
        <taxon>Euteleostomi</taxon>
        <taxon>Mammalia</taxon>
        <taxon>Eutheria</taxon>
        <taxon>Euarchontoglires</taxon>
        <taxon>Glires</taxon>
        <taxon>Rodentia</taxon>
        <taxon>Myomorpha</taxon>
        <taxon>Muroidea</taxon>
        <taxon>Muridae</taxon>
        <taxon>Murinae</taxon>
        <taxon>Rattus</taxon>
    </lineage>
</organism>
<dbReference type="EMBL" id="U51438">
    <property type="protein sequence ID" value="AAC52481.1"/>
    <property type="molecule type" value="mRNA"/>
</dbReference>
<dbReference type="EMBL" id="U67884">
    <property type="protein sequence ID" value="AAB40659.1"/>
    <property type="molecule type" value="mRNA"/>
</dbReference>
<dbReference type="RefSeq" id="NP_110479.1">
    <property type="nucleotide sequence ID" value="NM_030852.2"/>
</dbReference>
<dbReference type="SMR" id="Q62946"/>
<dbReference type="STRING" id="10116.ENSRNOP00000002050"/>
<dbReference type="PhosphoSitePlus" id="Q62946"/>
<dbReference type="PaxDb" id="10116-ENSRNOP00000002050"/>
<dbReference type="GeneID" id="81510"/>
<dbReference type="KEGG" id="rno:81510"/>
<dbReference type="UCSC" id="RGD:620883">
    <property type="organism name" value="rat"/>
</dbReference>
<dbReference type="AGR" id="RGD:620883"/>
<dbReference type="CTD" id="8190"/>
<dbReference type="RGD" id="620883">
    <property type="gene designation" value="Mia"/>
</dbReference>
<dbReference type="VEuPathDB" id="HostDB:ENSRNOG00000001499"/>
<dbReference type="eggNOG" id="ENOG502S2XN">
    <property type="taxonomic scope" value="Eukaryota"/>
</dbReference>
<dbReference type="HOGENOM" id="CLU_158739_0_0_1"/>
<dbReference type="InParanoid" id="Q62946"/>
<dbReference type="OMA" id="VVQENQY"/>
<dbReference type="OrthoDB" id="19010at9989"/>
<dbReference type="PRO" id="PR:Q62946"/>
<dbReference type="Proteomes" id="UP000002494">
    <property type="component" value="Chromosome 1"/>
</dbReference>
<dbReference type="Bgee" id="ENSRNOG00000001499">
    <property type="expression patterns" value="Expressed in pancreas and 14 other cell types or tissues"/>
</dbReference>
<dbReference type="GO" id="GO:0005576">
    <property type="term" value="C:extracellular region"/>
    <property type="evidence" value="ECO:0007669"/>
    <property type="project" value="UniProtKB-SubCell"/>
</dbReference>
<dbReference type="GO" id="GO:0008083">
    <property type="term" value="F:growth factor activity"/>
    <property type="evidence" value="ECO:0007669"/>
    <property type="project" value="UniProtKB-KW"/>
</dbReference>
<dbReference type="GO" id="GO:0007160">
    <property type="term" value="P:cell-matrix adhesion"/>
    <property type="evidence" value="ECO:0000266"/>
    <property type="project" value="RGD"/>
</dbReference>
<dbReference type="GO" id="GO:0030198">
    <property type="term" value="P:extracellular matrix organization"/>
    <property type="evidence" value="ECO:0000266"/>
    <property type="project" value="RGD"/>
</dbReference>
<dbReference type="FunFam" id="2.30.30.40:FF:000175">
    <property type="entry name" value="Melanoma-derived growth regulatory protein"/>
    <property type="match status" value="1"/>
</dbReference>
<dbReference type="Gene3D" id="2.30.30.40">
    <property type="entry name" value="SH3 Domains"/>
    <property type="match status" value="1"/>
</dbReference>
<dbReference type="InterPro" id="IPR043369">
    <property type="entry name" value="MIA"/>
</dbReference>
<dbReference type="InterPro" id="IPR036028">
    <property type="entry name" value="SH3-like_dom_sf"/>
</dbReference>
<dbReference type="InterPro" id="IPR001452">
    <property type="entry name" value="SH3_domain"/>
</dbReference>
<dbReference type="PANTHER" id="PTHR47312">
    <property type="entry name" value="MELANOMA-DERIVED GROWTH REGULATORY PROTEIN"/>
    <property type="match status" value="1"/>
</dbReference>
<dbReference type="PANTHER" id="PTHR47312:SF1">
    <property type="entry name" value="MELANOMA-DERIVED GROWTH REGULATORY PROTEIN"/>
    <property type="match status" value="1"/>
</dbReference>
<dbReference type="Pfam" id="PF07653">
    <property type="entry name" value="SH3_2"/>
    <property type="match status" value="1"/>
</dbReference>
<dbReference type="SMART" id="SM00326">
    <property type="entry name" value="SH3"/>
    <property type="match status" value="1"/>
</dbReference>
<dbReference type="SUPFAM" id="SSF50044">
    <property type="entry name" value="SH3-domain"/>
    <property type="match status" value="1"/>
</dbReference>
<dbReference type="PROSITE" id="PS50002">
    <property type="entry name" value="SH3"/>
    <property type="match status" value="1"/>
</dbReference>
<name>MIA_RAT</name>
<sequence length="130" mass="14536">MVCSPVLLGIVILSVFSGLSRADRAMPKLADRKLCADEECSHPISMAVALQDYVAPDCRFLTIYRGQVVYVFSKLKGRGRLFWGGSVQGDYYGDLAAHLGYFPSSIVREDLTLKPGKVDMKTDEWDFYCQ</sequence>
<keyword id="KW-1015">Disulfide bond</keyword>
<keyword id="KW-0339">Growth factor</keyword>
<keyword id="KW-1185">Reference proteome</keyword>
<keyword id="KW-0964">Secreted</keyword>
<keyword id="KW-0728">SH3 domain</keyword>
<keyword id="KW-0732">Signal</keyword>
<evidence type="ECO:0000250" key="1"/>
<evidence type="ECO:0000255" key="2"/>
<evidence type="ECO:0000255" key="3">
    <source>
        <dbReference type="PROSITE-ProRule" id="PRU00192"/>
    </source>
</evidence>
<evidence type="ECO:0000305" key="4"/>
<comment type="function">
    <text>May function during cartilage development and maintenance.</text>
</comment>
<comment type="subunit">
    <text evidence="1">Interacts with FASLG.</text>
</comment>
<comment type="subcellular location">
    <subcellularLocation>
        <location>Secreted</location>
    </subcellularLocation>
</comment>
<comment type="tissue specificity">
    <text>Cartilage primordia and cartilage.</text>
</comment>
<comment type="induction">
    <text>Repressed by retinoic acid.</text>
</comment>
<comment type="PTM">
    <text>May possess two intramolecular disulfide bonds.</text>
</comment>
<comment type="similarity">
    <text evidence="4">Belongs to the MIA/OTOR family.</text>
</comment>
<accession>Q62946</accession>
<accession>P97591</accession>
<proteinExistence type="evidence at transcript level"/>